<organism>
    <name type="scientific">Ehrlichia ruminantium (strain Gardel)</name>
    <dbReference type="NCBI Taxonomy" id="302409"/>
    <lineage>
        <taxon>Bacteria</taxon>
        <taxon>Pseudomonadati</taxon>
        <taxon>Pseudomonadota</taxon>
        <taxon>Alphaproteobacteria</taxon>
        <taxon>Rickettsiales</taxon>
        <taxon>Anaplasmataceae</taxon>
        <taxon>Ehrlichia</taxon>
    </lineage>
</organism>
<keyword id="KW-0067">ATP-binding</keyword>
<keyword id="KW-0997">Cell inner membrane</keyword>
<keyword id="KW-1003">Cell membrane</keyword>
<keyword id="KW-0472">Membrane</keyword>
<keyword id="KW-0547">Nucleotide-binding</keyword>
<keyword id="KW-1278">Translocase</keyword>
<keyword id="KW-0813">Transport</keyword>
<proteinExistence type="inferred from homology"/>
<accession>Q5FFC0</accession>
<gene>
    <name evidence="1" type="primary">lolD</name>
    <name type="ordered locus">ERGA_CDS_01120</name>
</gene>
<reference key="1">
    <citation type="journal article" date="2006" name="J. Bacteriol.">
        <title>Comparative genomic analysis of three strains of Ehrlichia ruminantium reveals an active process of genome size plasticity.</title>
        <authorList>
            <person name="Frutos R."/>
            <person name="Viari A."/>
            <person name="Ferraz C."/>
            <person name="Morgat A."/>
            <person name="Eychenie S."/>
            <person name="Kandassamy Y."/>
            <person name="Chantal I."/>
            <person name="Bensaid A."/>
            <person name="Coissac E."/>
            <person name="Vachiery N."/>
            <person name="Demaille J."/>
            <person name="Martinez D."/>
        </authorList>
    </citation>
    <scope>NUCLEOTIDE SEQUENCE [LARGE SCALE GENOMIC DNA]</scope>
    <source>
        <strain>Gardel</strain>
    </source>
</reference>
<name>LOLD_EHRRG</name>
<dbReference type="EC" id="7.6.2.-" evidence="1"/>
<dbReference type="EMBL" id="CR925677">
    <property type="protein sequence ID" value="CAI27564.1"/>
    <property type="status" value="ALT_INIT"/>
    <property type="molecule type" value="Genomic_DNA"/>
</dbReference>
<dbReference type="RefSeq" id="WP_011154803.1">
    <property type="nucleotide sequence ID" value="NC_006831.1"/>
</dbReference>
<dbReference type="SMR" id="Q5FFC0"/>
<dbReference type="KEGG" id="erg:ERGA_CDS_01120"/>
<dbReference type="HOGENOM" id="CLU_000604_1_22_5"/>
<dbReference type="Proteomes" id="UP000000533">
    <property type="component" value="Chromosome"/>
</dbReference>
<dbReference type="GO" id="GO:0005886">
    <property type="term" value="C:plasma membrane"/>
    <property type="evidence" value="ECO:0007669"/>
    <property type="project" value="UniProtKB-SubCell"/>
</dbReference>
<dbReference type="GO" id="GO:0005524">
    <property type="term" value="F:ATP binding"/>
    <property type="evidence" value="ECO:0007669"/>
    <property type="project" value="UniProtKB-KW"/>
</dbReference>
<dbReference type="GO" id="GO:0016887">
    <property type="term" value="F:ATP hydrolysis activity"/>
    <property type="evidence" value="ECO:0007669"/>
    <property type="project" value="InterPro"/>
</dbReference>
<dbReference type="CDD" id="cd03255">
    <property type="entry name" value="ABC_MJ0796_LolCDE_FtsE"/>
    <property type="match status" value="1"/>
</dbReference>
<dbReference type="Gene3D" id="3.40.50.300">
    <property type="entry name" value="P-loop containing nucleotide triphosphate hydrolases"/>
    <property type="match status" value="1"/>
</dbReference>
<dbReference type="InterPro" id="IPR003593">
    <property type="entry name" value="AAA+_ATPase"/>
</dbReference>
<dbReference type="InterPro" id="IPR003439">
    <property type="entry name" value="ABC_transporter-like_ATP-bd"/>
</dbReference>
<dbReference type="InterPro" id="IPR017871">
    <property type="entry name" value="ABC_transporter-like_CS"/>
</dbReference>
<dbReference type="InterPro" id="IPR017911">
    <property type="entry name" value="MacB-like_ATP-bd"/>
</dbReference>
<dbReference type="InterPro" id="IPR027417">
    <property type="entry name" value="P-loop_NTPase"/>
</dbReference>
<dbReference type="PANTHER" id="PTHR42798:SF7">
    <property type="entry name" value="ALPHA-D-RIBOSE 1-METHYLPHOSPHONATE 5-TRIPHOSPHATE SYNTHASE SUBUNIT PHNL"/>
    <property type="match status" value="1"/>
</dbReference>
<dbReference type="PANTHER" id="PTHR42798">
    <property type="entry name" value="LIPOPROTEIN-RELEASING SYSTEM ATP-BINDING PROTEIN LOLD"/>
    <property type="match status" value="1"/>
</dbReference>
<dbReference type="Pfam" id="PF00005">
    <property type="entry name" value="ABC_tran"/>
    <property type="match status" value="1"/>
</dbReference>
<dbReference type="SMART" id="SM00382">
    <property type="entry name" value="AAA"/>
    <property type="match status" value="1"/>
</dbReference>
<dbReference type="SUPFAM" id="SSF52540">
    <property type="entry name" value="P-loop containing nucleoside triphosphate hydrolases"/>
    <property type="match status" value="1"/>
</dbReference>
<dbReference type="PROSITE" id="PS00211">
    <property type="entry name" value="ABC_TRANSPORTER_1"/>
    <property type="match status" value="1"/>
</dbReference>
<dbReference type="PROSITE" id="PS50893">
    <property type="entry name" value="ABC_TRANSPORTER_2"/>
    <property type="match status" value="1"/>
</dbReference>
<dbReference type="PROSITE" id="PS51244">
    <property type="entry name" value="LOLD"/>
    <property type="match status" value="1"/>
</dbReference>
<sequence>MSIVFALSAISKSFGKNNQVNIIINANLQIKKGEIVALIGPSGSGKSTLLHIAGLLDTPSSGSVFINNIECSATTSDREKTYLRRNFLGFVYQFHHLLQEFSVLENVMLPQIIIGKSNEVARKNAIELLSLVKLQDKLLMSISQLSGGERQRVAIARSLINYPSIILADEPTGSLDNDTALEVFSLLHKYAKEKNISVFLATHNHILAKKADKIVQINSGTLQNYTDY</sequence>
<protein>
    <recommendedName>
        <fullName evidence="1">Lipoprotein-releasing system ATP-binding protein LolD</fullName>
        <ecNumber evidence="1">7.6.2.-</ecNumber>
    </recommendedName>
</protein>
<feature type="chain" id="PRO_0000272080" description="Lipoprotein-releasing system ATP-binding protein LolD">
    <location>
        <begin position="1"/>
        <end position="228"/>
    </location>
</feature>
<feature type="domain" description="ABC transporter" evidence="1">
    <location>
        <begin position="5"/>
        <end position="228"/>
    </location>
</feature>
<feature type="binding site" evidence="1">
    <location>
        <begin position="40"/>
        <end position="47"/>
    </location>
    <ligand>
        <name>ATP</name>
        <dbReference type="ChEBI" id="CHEBI:30616"/>
    </ligand>
</feature>
<comment type="function">
    <text evidence="1">Part of the ABC transporter complex LolCDE involved in the translocation of mature outer membrane-directed lipoproteins, from the inner membrane to the periplasmic chaperone, LolA. Responsible for the formation of the LolA-lipoprotein complex in an ATP-dependent manner.</text>
</comment>
<comment type="subunit">
    <text evidence="1">The complex is composed of two ATP-binding proteins (LolD) and two transmembrane proteins (LolC and LolE).</text>
</comment>
<comment type="subcellular location">
    <subcellularLocation>
        <location evidence="1">Cell inner membrane</location>
        <topology evidence="1">Peripheral membrane protein</topology>
    </subcellularLocation>
</comment>
<comment type="similarity">
    <text evidence="1">Belongs to the ABC transporter superfamily. Lipoprotein translocase (TC 3.A.1.125) family.</text>
</comment>
<comment type="sequence caution" evidence="2">
    <conflict type="erroneous initiation">
        <sequence resource="EMBL-CDS" id="CAI27564"/>
    </conflict>
</comment>
<evidence type="ECO:0000255" key="1">
    <source>
        <dbReference type="HAMAP-Rule" id="MF_01708"/>
    </source>
</evidence>
<evidence type="ECO:0000305" key="2"/>